<protein>
    <recommendedName>
        <fullName evidence="1">Flavohemoprotein</fullName>
    </recommendedName>
    <alternativeName>
        <fullName evidence="1">Flavohemoglobin</fullName>
    </alternativeName>
    <alternativeName>
        <fullName evidence="1">Hemoglobin-like protein</fullName>
    </alternativeName>
    <alternativeName>
        <fullName evidence="1">Nitric oxide dioxygenase</fullName>
        <shortName evidence="1">NO oxygenase</shortName>
        <shortName evidence="1">NOD</shortName>
        <ecNumber evidence="1">1.14.12.17</ecNumber>
    </alternativeName>
</protein>
<proteinExistence type="inferred from homology"/>
<feature type="chain" id="PRO_0000052451" description="Flavohemoprotein">
    <location>
        <begin position="1"/>
        <end position="394"/>
    </location>
</feature>
<feature type="domain" description="Globin" evidence="2">
    <location>
        <begin position="1"/>
        <end position="136"/>
    </location>
</feature>
<feature type="domain" description="FAD-binding FR-type" evidence="1">
    <location>
        <begin position="150"/>
        <end position="255"/>
    </location>
</feature>
<feature type="region of interest" description="Reductase">
    <location>
        <begin position="147"/>
        <end position="394"/>
    </location>
</feature>
<feature type="active site" description="Charge relay system" evidence="1">
    <location>
        <position position="95"/>
    </location>
</feature>
<feature type="active site" description="Charge relay system" evidence="1">
    <location>
        <position position="135"/>
    </location>
</feature>
<feature type="binding site" description="proximal binding residue" evidence="1">
    <location>
        <position position="85"/>
    </location>
    <ligand>
        <name>heme b</name>
        <dbReference type="ChEBI" id="CHEBI:60344"/>
    </ligand>
    <ligandPart>
        <name>Fe</name>
        <dbReference type="ChEBI" id="CHEBI:18248"/>
    </ligandPart>
</feature>
<feature type="binding site" evidence="1">
    <location>
        <position position="188"/>
    </location>
    <ligand>
        <name>FAD</name>
        <dbReference type="ChEBI" id="CHEBI:57692"/>
    </ligand>
</feature>
<feature type="binding site" evidence="1">
    <location>
        <begin position="204"/>
        <end position="207"/>
    </location>
    <ligand>
        <name>FAD</name>
        <dbReference type="ChEBI" id="CHEBI:57692"/>
    </ligand>
</feature>
<feature type="binding site" evidence="1">
    <location>
        <begin position="268"/>
        <end position="273"/>
    </location>
    <ligand>
        <name>NADP(+)</name>
        <dbReference type="ChEBI" id="CHEBI:58349"/>
    </ligand>
</feature>
<feature type="binding site" evidence="1">
    <location>
        <begin position="387"/>
        <end position="390"/>
    </location>
    <ligand>
        <name>FAD</name>
        <dbReference type="ChEBI" id="CHEBI:57692"/>
    </ligand>
</feature>
<feature type="site" description="Involved in heme-bound ligand stabilization and O-O bond activation" evidence="1">
    <location>
        <position position="29"/>
    </location>
</feature>
<feature type="site" description="Influences the redox potential of the prosthetic heme and FAD groups" evidence="1">
    <location>
        <position position="84"/>
    </location>
</feature>
<feature type="site" description="Influences the redox potential of the prosthetic heme and FAD groups" evidence="1">
    <location>
        <position position="386"/>
    </location>
</feature>
<keyword id="KW-0216">Detoxification</keyword>
<keyword id="KW-0274">FAD</keyword>
<keyword id="KW-0285">Flavoprotein</keyword>
<keyword id="KW-0349">Heme</keyword>
<keyword id="KW-0408">Iron</keyword>
<keyword id="KW-0479">Metal-binding</keyword>
<keyword id="KW-0520">NAD</keyword>
<keyword id="KW-0521">NADP</keyword>
<keyword id="KW-0560">Oxidoreductase</keyword>
<keyword id="KW-0561">Oxygen transport</keyword>
<keyword id="KW-0813">Transport</keyword>
<comment type="function">
    <text evidence="1">Is involved in NO detoxification in an aerobic process, termed nitric oxide dioxygenase (NOD) reaction that utilizes O(2) and NAD(P)H to convert NO to nitrate, which protects the bacterium from various noxious nitrogen compounds. Therefore, plays a central role in the inducible response to nitrosative stress.</text>
</comment>
<comment type="catalytic activity">
    <reaction evidence="1">
        <text>2 nitric oxide + NADPH + 2 O2 = 2 nitrate + NADP(+) + H(+)</text>
        <dbReference type="Rhea" id="RHEA:19465"/>
        <dbReference type="ChEBI" id="CHEBI:15378"/>
        <dbReference type="ChEBI" id="CHEBI:15379"/>
        <dbReference type="ChEBI" id="CHEBI:16480"/>
        <dbReference type="ChEBI" id="CHEBI:17632"/>
        <dbReference type="ChEBI" id="CHEBI:57783"/>
        <dbReference type="ChEBI" id="CHEBI:58349"/>
        <dbReference type="EC" id="1.14.12.17"/>
    </reaction>
</comment>
<comment type="catalytic activity">
    <reaction evidence="1">
        <text>2 nitric oxide + NADH + 2 O2 = 2 nitrate + NAD(+) + H(+)</text>
        <dbReference type="Rhea" id="RHEA:19469"/>
        <dbReference type="ChEBI" id="CHEBI:15378"/>
        <dbReference type="ChEBI" id="CHEBI:15379"/>
        <dbReference type="ChEBI" id="CHEBI:16480"/>
        <dbReference type="ChEBI" id="CHEBI:17632"/>
        <dbReference type="ChEBI" id="CHEBI:57540"/>
        <dbReference type="ChEBI" id="CHEBI:57945"/>
        <dbReference type="EC" id="1.14.12.17"/>
    </reaction>
</comment>
<comment type="cofactor">
    <cofactor evidence="1">
        <name>heme b</name>
        <dbReference type="ChEBI" id="CHEBI:60344"/>
    </cofactor>
    <text evidence="1">Binds 1 heme b (iron(II)-protoporphyrin IX) group per subunit.</text>
</comment>
<comment type="cofactor">
    <cofactor evidence="1">
        <name>FAD</name>
        <dbReference type="ChEBI" id="CHEBI:57692"/>
    </cofactor>
    <text evidence="1">Binds 1 FAD per subunit.</text>
</comment>
<comment type="domain">
    <text>Consists of two distinct domains; an N-terminal heme-containing oxygen-binding domain and a C-terminal reductase domain with binding sites for FAD and NAD(P)H.</text>
</comment>
<comment type="similarity">
    <text evidence="1">Belongs to the globin family. Two-domain flavohemoproteins subfamily.</text>
</comment>
<comment type="similarity">
    <text evidence="1">In the C-terminal section; belongs to the flavoprotein pyridine nucleotide cytochrome reductase family.</text>
</comment>
<sequence>MLSENTINIVKSTAPLLAETGPKLTAHFYQRMFEHNPELKDIFNMSNQRNGDQREALFNAICAYASNIDNLPALLGAVEKIAHKHSSFLITADQYQIVGGHLLATIDELFSPGQAVLDAWAEAYGVLANVFIQREEQIYQDNQSQTGGWRGLREFELVEKQYESAHICSFVFKPVDGGSVVSFKPGQYLGIYINDEQFENQEIRQYSLSSSVRPDCYRISVKREEGGRVSNYLHDHLDVGSKVKLAAPAGDFFLDAAPTAPVVLISAGVGLTPTLSMLESLTEHQAPVTWIHATENGQQHAFKQHVKQLVETHPHFNSLVWYNQPNSDDKIGDDFQFSGWVNLHEIETVLKQADVQVYFCGPVGFMQFIAKQLLEMGVPEQQFHYECFGPHKVV</sequence>
<reference key="1">
    <citation type="submission" date="2002-12" db="EMBL/GenBank/DDBJ databases">
        <title>Complete genome sequence of Vibrio vulnificus CMCP6.</title>
        <authorList>
            <person name="Rhee J.H."/>
            <person name="Kim S.Y."/>
            <person name="Chung S.S."/>
            <person name="Kim J.J."/>
            <person name="Moon Y.H."/>
            <person name="Jeong H."/>
            <person name="Choy H.E."/>
        </authorList>
    </citation>
    <scope>NUCLEOTIDE SEQUENCE [LARGE SCALE GENOMIC DNA]</scope>
    <source>
        <strain>CMCP6</strain>
    </source>
</reference>
<evidence type="ECO:0000255" key="1">
    <source>
        <dbReference type="HAMAP-Rule" id="MF_01252"/>
    </source>
</evidence>
<evidence type="ECO:0000255" key="2">
    <source>
        <dbReference type="PROSITE-ProRule" id="PRU00238"/>
    </source>
</evidence>
<organism>
    <name type="scientific">Vibrio vulnificus (strain CMCP6)</name>
    <dbReference type="NCBI Taxonomy" id="216895"/>
    <lineage>
        <taxon>Bacteria</taxon>
        <taxon>Pseudomonadati</taxon>
        <taxon>Pseudomonadota</taxon>
        <taxon>Gammaproteobacteria</taxon>
        <taxon>Vibrionales</taxon>
        <taxon>Vibrionaceae</taxon>
        <taxon>Vibrio</taxon>
    </lineage>
</organism>
<dbReference type="EC" id="1.14.12.17" evidence="1"/>
<dbReference type="EMBL" id="AE016795">
    <property type="protein sequence ID" value="AAO09756.1"/>
    <property type="molecule type" value="Genomic_DNA"/>
</dbReference>
<dbReference type="RefSeq" id="WP_011079283.1">
    <property type="nucleotide sequence ID" value="NC_004459.3"/>
</dbReference>
<dbReference type="SMR" id="Q8DCU2"/>
<dbReference type="KEGG" id="vvu:VV1_1301"/>
<dbReference type="HOGENOM" id="CLU_003827_12_0_6"/>
<dbReference type="Proteomes" id="UP000002275">
    <property type="component" value="Chromosome 1"/>
</dbReference>
<dbReference type="GO" id="GO:0071949">
    <property type="term" value="F:FAD binding"/>
    <property type="evidence" value="ECO:0007669"/>
    <property type="project" value="InterPro"/>
</dbReference>
<dbReference type="GO" id="GO:0020037">
    <property type="term" value="F:heme binding"/>
    <property type="evidence" value="ECO:0007669"/>
    <property type="project" value="InterPro"/>
</dbReference>
<dbReference type="GO" id="GO:0046872">
    <property type="term" value="F:metal ion binding"/>
    <property type="evidence" value="ECO:0007669"/>
    <property type="project" value="UniProtKB-KW"/>
</dbReference>
<dbReference type="GO" id="GO:0008941">
    <property type="term" value="F:nitric oxide dioxygenase NAD(P)H activity"/>
    <property type="evidence" value="ECO:0007669"/>
    <property type="project" value="UniProtKB-UniRule"/>
</dbReference>
<dbReference type="GO" id="GO:0019825">
    <property type="term" value="F:oxygen binding"/>
    <property type="evidence" value="ECO:0007669"/>
    <property type="project" value="InterPro"/>
</dbReference>
<dbReference type="GO" id="GO:0005344">
    <property type="term" value="F:oxygen carrier activity"/>
    <property type="evidence" value="ECO:0007669"/>
    <property type="project" value="UniProtKB-UniRule"/>
</dbReference>
<dbReference type="GO" id="GO:0071500">
    <property type="term" value="P:cellular response to nitrosative stress"/>
    <property type="evidence" value="ECO:0007669"/>
    <property type="project" value="TreeGrafter"/>
</dbReference>
<dbReference type="GO" id="GO:0046210">
    <property type="term" value="P:nitric oxide catabolic process"/>
    <property type="evidence" value="ECO:0007669"/>
    <property type="project" value="TreeGrafter"/>
</dbReference>
<dbReference type="GO" id="GO:0009636">
    <property type="term" value="P:response to toxic substance"/>
    <property type="evidence" value="ECO:0007669"/>
    <property type="project" value="UniProtKB-KW"/>
</dbReference>
<dbReference type="CDD" id="cd06184">
    <property type="entry name" value="flavohem_like_fad_nad_binding"/>
    <property type="match status" value="1"/>
</dbReference>
<dbReference type="CDD" id="cd14776">
    <property type="entry name" value="HmpEc-globin-like"/>
    <property type="match status" value="1"/>
</dbReference>
<dbReference type="FunFam" id="1.10.490.10:FF:000003">
    <property type="entry name" value="Flavohemoprotein"/>
    <property type="match status" value="1"/>
</dbReference>
<dbReference type="FunFam" id="2.40.30.10:FF:000034">
    <property type="entry name" value="Flavohemoprotein"/>
    <property type="match status" value="1"/>
</dbReference>
<dbReference type="FunFam" id="3.40.50.80:FF:000010">
    <property type="entry name" value="Flavohemoprotein"/>
    <property type="match status" value="1"/>
</dbReference>
<dbReference type="Gene3D" id="1.10.490.10">
    <property type="entry name" value="Globins"/>
    <property type="match status" value="1"/>
</dbReference>
<dbReference type="Gene3D" id="3.40.50.80">
    <property type="entry name" value="Nucleotide-binding domain of ferredoxin-NADP reductase (FNR) module"/>
    <property type="match status" value="1"/>
</dbReference>
<dbReference type="Gene3D" id="2.40.30.10">
    <property type="entry name" value="Translation factors"/>
    <property type="match status" value="1"/>
</dbReference>
<dbReference type="HAMAP" id="MF_01252">
    <property type="entry name" value="Hmp"/>
    <property type="match status" value="1"/>
</dbReference>
<dbReference type="InterPro" id="IPR008333">
    <property type="entry name" value="Cbr1-like_FAD-bd_dom"/>
</dbReference>
<dbReference type="InterPro" id="IPR017927">
    <property type="entry name" value="FAD-bd_FR_type"/>
</dbReference>
<dbReference type="InterPro" id="IPR001709">
    <property type="entry name" value="Flavoprot_Pyr_Nucl_cyt_Rdtase"/>
</dbReference>
<dbReference type="InterPro" id="IPR039261">
    <property type="entry name" value="FNR_nucleotide-bd"/>
</dbReference>
<dbReference type="InterPro" id="IPR000971">
    <property type="entry name" value="Globin"/>
</dbReference>
<dbReference type="InterPro" id="IPR009050">
    <property type="entry name" value="Globin-like_sf"/>
</dbReference>
<dbReference type="InterPro" id="IPR012292">
    <property type="entry name" value="Globin/Proto"/>
</dbReference>
<dbReference type="InterPro" id="IPR023950">
    <property type="entry name" value="Hmp"/>
</dbReference>
<dbReference type="InterPro" id="IPR001433">
    <property type="entry name" value="OxRdtase_FAD/NAD-bd"/>
</dbReference>
<dbReference type="InterPro" id="IPR017938">
    <property type="entry name" value="Riboflavin_synthase-like_b-brl"/>
</dbReference>
<dbReference type="NCBIfam" id="NF009805">
    <property type="entry name" value="PRK13289.1"/>
    <property type="match status" value="1"/>
</dbReference>
<dbReference type="PANTHER" id="PTHR43396">
    <property type="entry name" value="FLAVOHEMOPROTEIN"/>
    <property type="match status" value="1"/>
</dbReference>
<dbReference type="PANTHER" id="PTHR43396:SF3">
    <property type="entry name" value="FLAVOHEMOPROTEIN"/>
    <property type="match status" value="1"/>
</dbReference>
<dbReference type="Pfam" id="PF00970">
    <property type="entry name" value="FAD_binding_6"/>
    <property type="match status" value="1"/>
</dbReference>
<dbReference type="Pfam" id="PF00042">
    <property type="entry name" value="Globin"/>
    <property type="match status" value="1"/>
</dbReference>
<dbReference type="Pfam" id="PF00175">
    <property type="entry name" value="NAD_binding_1"/>
    <property type="match status" value="1"/>
</dbReference>
<dbReference type="PRINTS" id="PR00371">
    <property type="entry name" value="FPNCR"/>
</dbReference>
<dbReference type="PRINTS" id="PR00410">
    <property type="entry name" value="PHEHYDRXLASE"/>
</dbReference>
<dbReference type="SUPFAM" id="SSF52343">
    <property type="entry name" value="Ferredoxin reductase-like, C-terminal NADP-linked domain"/>
    <property type="match status" value="1"/>
</dbReference>
<dbReference type="SUPFAM" id="SSF46458">
    <property type="entry name" value="Globin-like"/>
    <property type="match status" value="1"/>
</dbReference>
<dbReference type="SUPFAM" id="SSF63380">
    <property type="entry name" value="Riboflavin synthase domain-like"/>
    <property type="match status" value="1"/>
</dbReference>
<dbReference type="PROSITE" id="PS51384">
    <property type="entry name" value="FAD_FR"/>
    <property type="match status" value="1"/>
</dbReference>
<dbReference type="PROSITE" id="PS01033">
    <property type="entry name" value="GLOBIN"/>
    <property type="match status" value="1"/>
</dbReference>
<name>HMP_VIBVU</name>
<accession>Q8DCU2</accession>
<gene>
    <name evidence="1" type="primary">hmp</name>
    <name type="ordered locus">VV1_1301</name>
</gene>